<protein>
    <recommendedName>
        <fullName>Capsid protein</fullName>
    </recommendedName>
    <alternativeName>
        <fullName>Coat protein</fullName>
        <shortName>CP</shortName>
    </alternativeName>
</protein>
<accession>P03561</accession>
<sequence length="258" mass="30130">MSKRPGDIIISTPGSKVRRRLNFDSPYRNRATAPTVHVTNRKRAWVNRPMYRKPTMYRMYRSPDIPRGCEGPCKVQSFEQRDDVKHLGICKVISDVTRGPGLTHRVGKRFCIKSIYILGKIWLDETIKKQNHTNNVIFYLLRDRRPYGNAPQDFGQIFNMFDNEPSTATIKNDLRDRFQVLRKFHATVVGGPYGMKEQALVKRFYRLNHHVTYNHQEAGKYENHTENALLLYMACTHASNPVYATLKIRIYFYDSIGN</sequence>
<comment type="function">
    <text>Encapsidates the viral DNA into characteristic twinned ('geminate') particles. Binds the genomic viral ssDNA and shuttles it into and out of the cell nucleus. The CP of bipartite geminiviruses is not required for cell-to-cell or systemic movement.</text>
</comment>
<comment type="subunit">
    <text evidence="1">Homomultimer. Binds to single-stranded and double-stranded viral DNA. Interacts (via nuclear localization signals) with host importin alpha-1a (By similarity).</text>
</comment>
<comment type="subcellular location">
    <subcellularLocation>
        <location evidence="4">Virion</location>
    </subcellularLocation>
    <subcellularLocation>
        <location evidence="3">Host nucleus</location>
    </subcellularLocation>
    <text evidence="1">It is actively transported into the host cell nucleus. It may be exported out of the nucleus through a nuclear export signal for cell-to-cell movement and spread (By similarity).</text>
</comment>
<comment type="similarity">
    <text evidence="4">Belongs to the geminiviridae capsid protein family.</text>
</comment>
<proteinExistence type="evidence at protein level"/>
<organism>
    <name type="scientific">African cassava mosaic virus (isolate West Kenyan 844)</name>
    <name type="common">ACMV</name>
    <name type="synonym">Cassava latent virus (isolate West Kenyan 844)</name>
    <dbReference type="NCBI Taxonomy" id="10818"/>
    <lineage>
        <taxon>Viruses</taxon>
        <taxon>Monodnaviria</taxon>
        <taxon>Shotokuvirae</taxon>
        <taxon>Cressdnaviricota</taxon>
        <taxon>Repensiviricetes</taxon>
        <taxon>Geplafuvirales</taxon>
        <taxon>Geminiviridae</taxon>
        <taxon>Begomovirus</taxon>
        <taxon>Begomovirus manihotis</taxon>
    </lineage>
</organism>
<keyword id="KW-0002">3D-structure</keyword>
<keyword id="KW-0167">Capsid protein</keyword>
<keyword id="KW-0238">DNA-binding</keyword>
<keyword id="KW-1048">Host nucleus</keyword>
<keyword id="KW-0945">Host-virus interaction</keyword>
<keyword id="KW-0479">Metal-binding</keyword>
<keyword id="KW-1140">T=1 icosahedral capsid protein</keyword>
<keyword id="KW-1163">Viral penetration into host nucleus</keyword>
<keyword id="KW-0946">Virion</keyword>
<keyword id="KW-1160">Virus entry into host cell</keyword>
<keyword id="KW-0862">Zinc</keyword>
<keyword id="KW-0863">Zinc-finger</keyword>
<reference key="1">
    <citation type="journal article" date="1983" name="Nature">
        <title>Nucleotide sequence of cassava latent virus DNA.</title>
        <authorList>
            <person name="Stanley J."/>
            <person name="Gay M.R."/>
        </authorList>
    </citation>
    <scope>NUCLEOTIDE SEQUENCE [GENOMIC DNA]</scope>
</reference>
<reference key="2">
    <citation type="journal article" date="2001" name="Virology">
        <title>Subcellular targeting of the coat protein of African cassava mosaic geminivirus.</title>
        <authorList>
            <person name="Unseld S."/>
            <person name="Hoehnle M."/>
            <person name="Ringel M."/>
            <person name="Frischmuth T."/>
        </authorList>
    </citation>
    <scope>SUBCELLULAR LOCATION</scope>
    <scope>NUCLEAR LOCALIZATION SIGNALS</scope>
    <scope>NUCLEAR EXPORT SIGNAL</scope>
</reference>
<name>CAPSD_CLVK</name>
<dbReference type="EMBL" id="J02057">
    <property type="status" value="NOT_ANNOTATED_CDS"/>
    <property type="molecule type" value="Genomic_DNA"/>
</dbReference>
<dbReference type="PIR" id="A04164">
    <property type="entry name" value="QQOMC1"/>
</dbReference>
<dbReference type="PDB" id="6EK5">
    <property type="method" value="EM"/>
    <property type="resolution" value="4.20 A"/>
    <property type="chains" value="1/2/3/A/B/B1/B2/B3/BA/BB/BC/BD/BE/BF/BG/BH/BI/BJ/BK/BL/BM/BN/BO/BP/BQ/BR/BS/BT/BU/BV=48-252"/>
</dbReference>
<dbReference type="PDBsum" id="6EK5"/>
<dbReference type="SMR" id="P03561"/>
<dbReference type="Proteomes" id="UP000008452">
    <property type="component" value="Genome"/>
</dbReference>
<dbReference type="GO" id="GO:0043657">
    <property type="term" value="C:host cell"/>
    <property type="evidence" value="ECO:0007669"/>
    <property type="project" value="GOC"/>
</dbReference>
<dbReference type="GO" id="GO:0042025">
    <property type="term" value="C:host cell nucleus"/>
    <property type="evidence" value="ECO:0007669"/>
    <property type="project" value="UniProtKB-SubCell"/>
</dbReference>
<dbReference type="GO" id="GO:0039615">
    <property type="term" value="C:T=1 icosahedral viral capsid"/>
    <property type="evidence" value="ECO:0007669"/>
    <property type="project" value="UniProtKB-KW"/>
</dbReference>
<dbReference type="GO" id="GO:0003677">
    <property type="term" value="F:DNA binding"/>
    <property type="evidence" value="ECO:0007669"/>
    <property type="project" value="UniProtKB-KW"/>
</dbReference>
<dbReference type="GO" id="GO:0005198">
    <property type="term" value="F:structural molecule activity"/>
    <property type="evidence" value="ECO:0007669"/>
    <property type="project" value="InterPro"/>
</dbReference>
<dbReference type="GO" id="GO:0008270">
    <property type="term" value="F:zinc ion binding"/>
    <property type="evidence" value="ECO:0007669"/>
    <property type="project" value="UniProtKB-KW"/>
</dbReference>
<dbReference type="GO" id="GO:0046718">
    <property type="term" value="P:symbiont entry into host cell"/>
    <property type="evidence" value="ECO:0007669"/>
    <property type="project" value="UniProtKB-KW"/>
</dbReference>
<dbReference type="GO" id="GO:0075732">
    <property type="term" value="P:viral penetration into host nucleus"/>
    <property type="evidence" value="ECO:0007669"/>
    <property type="project" value="UniProtKB-KW"/>
</dbReference>
<dbReference type="Gene3D" id="2.60.120.20">
    <property type="match status" value="1"/>
</dbReference>
<dbReference type="InterPro" id="IPR000650">
    <property type="entry name" value="Gem_coat_AR1"/>
</dbReference>
<dbReference type="InterPro" id="IPR000263">
    <property type="entry name" value="GV_A/BR1_coat"/>
</dbReference>
<dbReference type="InterPro" id="IPR029053">
    <property type="entry name" value="Viral_coat"/>
</dbReference>
<dbReference type="Pfam" id="PF00844">
    <property type="entry name" value="Gemini_coat"/>
    <property type="match status" value="1"/>
</dbReference>
<dbReference type="PRINTS" id="PR00224">
    <property type="entry name" value="GEMCOATAR1"/>
</dbReference>
<dbReference type="PRINTS" id="PR00223">
    <property type="entry name" value="GEMCOATARBR1"/>
</dbReference>
<organismHost>
    <name type="scientific">Hewittia sublobata</name>
    <dbReference type="NCBI Taxonomy" id="197394"/>
</organismHost>
<organismHost>
    <name type="scientific">Jatropha multifida</name>
    <name type="common">Coralbush</name>
    <dbReference type="NCBI Taxonomy" id="3996"/>
</organismHost>
<organismHost>
    <name type="scientific">Laportea</name>
    <dbReference type="NCBI Taxonomy" id="194268"/>
</organismHost>
<organismHost>
    <name type="scientific">Manihot esculenta</name>
    <name type="common">Cassava</name>
    <name type="synonym">Jatropha manihot</name>
    <dbReference type="NCBI Taxonomy" id="3983"/>
</organismHost>
<feature type="chain" id="PRO_0000222180" description="Capsid protein">
    <location>
        <begin position="1"/>
        <end position="258"/>
    </location>
</feature>
<feature type="zinc finger region" evidence="2">
    <location>
        <begin position="69"/>
        <end position="86"/>
    </location>
</feature>
<feature type="short sequence motif" description="Bipartite nuclear localization signal" evidence="2">
    <location>
        <begin position="3"/>
        <end position="20"/>
    </location>
</feature>
<feature type="short sequence motif" description="Nuclear localization signal" evidence="2">
    <location>
        <begin position="41"/>
        <end position="55"/>
    </location>
</feature>
<feature type="short sequence motif" description="Nuclear export signal" evidence="2">
    <location>
        <begin position="102"/>
        <end position="123"/>
    </location>
</feature>
<feature type="short sequence motif" description="Bipartite nuclear localization signal" evidence="2">
    <location>
        <begin position="202"/>
        <end position="249"/>
    </location>
</feature>
<gene>
    <name type="ORF">AR1</name>
    <name type="ORF">AV1</name>
</gene>
<evidence type="ECO:0000250" key="1"/>
<evidence type="ECO:0000255" key="2"/>
<evidence type="ECO:0000269" key="3">
    <source>
    </source>
</evidence>
<evidence type="ECO:0000305" key="4"/>